<proteinExistence type="evidence at protein level"/>
<comment type="function">
    <text evidence="4 5">Recognizes glycoproteins with minor folding defects (PubMed:22960071). Reglucosylates single N-glycans near the misfolded part of the protein, thus providing quality control for protein folding in the endoplasmic reticulum (PubMed:22960071). Reglucosylated proteins are recognized by calreticulin for recycling to the endoplasmic reticulum and refolding or degradation (PubMed:11535823).</text>
</comment>
<comment type="catalytic activity">
    <reaction evidence="5 7">
        <text>N(4)-(alpha-D-Man-(1-&gt;2)-alpha-D-Man-(1-&gt;2)-alpha-D-Man-(1-&gt;3)-[alpha-D-Man-(1-&gt;2)-alpha-D-Man-(1-&gt;3)-[alpha-D-Man-(1-&gt;2)-alpha-D-Man-(1-&gt;6)]-alpha-D-Man-(1-&gt;6)]-beta-D-Man-(1-&gt;4)-beta-D-GlcNAc-(1-&gt;4)-beta-D-GlcNAc)-L-asparaginyl-[protein] (N-glucan mannose isomer 9A1,2,3B1,2,3) + UDP-alpha-D-glucose = N(4)-(alpha-D-Glc-(1-&gt;3)-alpha-D-Man-(1-&gt;2)-alpha-D-Man-(1-&gt;2)-alpha-D-Man-(1-&gt;3)-[alpha-D-Man-(1-&gt;2)-alpha-D-Man-(1-&gt;3)-[alpha-D-Man-(1-&gt;2)-alpha-D-Man-(1-&gt;6)]-alpha-D-Man-(1-&gt;6)]-beta-D-Man-(1-&gt;4)-beta-D-GlcNAc-(1-&gt;4)-beta-D-GlcNAc)-L-asparaginyl-[protein] + UDP + H(+)</text>
        <dbReference type="Rhea" id="RHEA:61304"/>
        <dbReference type="Rhea" id="RHEA-COMP:14356"/>
        <dbReference type="Rhea" id="RHEA-COMP:14357"/>
        <dbReference type="ChEBI" id="CHEBI:15378"/>
        <dbReference type="ChEBI" id="CHEBI:58223"/>
        <dbReference type="ChEBI" id="CHEBI:58885"/>
        <dbReference type="ChEBI" id="CHEBI:59080"/>
        <dbReference type="ChEBI" id="CHEBI:139493"/>
    </reaction>
</comment>
<comment type="cofactor">
    <cofactor evidence="7">
        <name>Ca(2+)</name>
        <dbReference type="ChEBI" id="CHEBI:29108"/>
    </cofactor>
    <cofactor evidence="7">
        <name>Mn(2+)</name>
        <dbReference type="ChEBI" id="CHEBI:29035"/>
    </cofactor>
</comment>
<comment type="biophysicochemical properties">
    <kinetics>
        <KM evidence="5">69 uM for Man9GlcNAc2 (at 37 degrees Celsius)</KM>
    </kinetics>
</comment>
<comment type="pathway">
    <text evidence="7">Protein modification; protein glycosylation.</text>
</comment>
<comment type="subunit">
    <text evidence="6 10">Monomer (PubMed:28490633). May interact with CG7484/Sep15 (Probable).</text>
</comment>
<comment type="subcellular location">
    <subcellularLocation>
        <location evidence="4 7">Endoplasmic reticulum lumen</location>
    </subcellularLocation>
    <subcellularLocation>
        <location evidence="4">Endoplasmic reticulum-Golgi intermediate compartment</location>
    </subcellularLocation>
</comment>
<comment type="developmental stage">
    <text evidence="4 7">Expressed in salivary glands (at protein level) (PubMed:11535823). Is present at low but detectable levels in the earliest embryos, increasing at 6-8 hours with a maximum at 10-12 hours (PubMed:7729408). Levels decrease thereafter and are not detected in 18-20 hours embryos and first instar larvae but is detected again at second instar to pupation (PubMed:7729408).</text>
</comment>
<comment type="similarity">
    <text evidence="9">Belongs to the glycosyltransferase 8 family.</text>
</comment>
<comment type="sequence caution" evidence="9">
    <conflict type="frameshift">
        <sequence resource="EMBL-CDS" id="AAL13582"/>
    </conflict>
</comment>
<gene>
    <name evidence="11" type="primary">Uggt</name>
    <name evidence="11" type="synonym">GT</name>
    <name evidence="11" type="synonym">UGGG</name>
    <name evidence="11" type="synonym">Ugt</name>
    <name evidence="11" type="ORF">CG6850</name>
</gene>
<protein>
    <recommendedName>
        <fullName evidence="11">UDP-glucose:glycoprotein glucosyltransferase</fullName>
        <shortName>UGT</shortName>
        <shortName evidence="8">dUGT</shortName>
        <ecNumber evidence="5 7">2.4.1.-</ecNumber>
    </recommendedName>
    <alternativeName>
        <fullName>UDP--Glc:glycoprotein glucosyltransferase</fullName>
    </alternativeName>
</protein>
<organism>
    <name type="scientific">Drosophila melanogaster</name>
    <name type="common">Fruit fly</name>
    <dbReference type="NCBI Taxonomy" id="7227"/>
    <lineage>
        <taxon>Eukaryota</taxon>
        <taxon>Metazoa</taxon>
        <taxon>Ecdysozoa</taxon>
        <taxon>Arthropoda</taxon>
        <taxon>Hexapoda</taxon>
        <taxon>Insecta</taxon>
        <taxon>Pterygota</taxon>
        <taxon>Neoptera</taxon>
        <taxon>Endopterygota</taxon>
        <taxon>Diptera</taxon>
        <taxon>Brachycera</taxon>
        <taxon>Muscomorpha</taxon>
        <taxon>Ephydroidea</taxon>
        <taxon>Drosophilidae</taxon>
        <taxon>Drosophila</taxon>
        <taxon>Sophophora</taxon>
    </lineage>
</organism>
<name>UGGG_DROME</name>
<accession>Q09332</accession>
<accession>B5RIN4</accession>
<accession>Q95U28</accession>
<accession>Q9VVT7</accession>
<reference key="1">
    <citation type="journal article" date="1995" name="EMBO J.">
        <title>Drosophila UDP-glucose:glycoprotein glucosyltransferase: sequence and characterization of an enzyme that distinguishes between denatured and native proteins.</title>
        <authorList>
            <person name="Parker C.G."/>
            <person name="Fessler L.I."/>
            <person name="Nelson R.E."/>
            <person name="Fessler J.H."/>
        </authorList>
    </citation>
    <scope>NUCLEOTIDE SEQUENCE [MRNA]</scope>
    <scope>PROTEIN SEQUENCE OF 23-37</scope>
    <scope>CATALYTIC ACTIVITY</scope>
    <scope>PATHWAY</scope>
    <scope>DEVELOPMENTAL STAGE</scope>
    <scope>SUBCELLULAR LOCATION</scope>
    <source>
        <tissue>Embryo</tissue>
    </source>
</reference>
<reference key="2">
    <citation type="journal article" date="2000" name="Science">
        <title>The genome sequence of Drosophila melanogaster.</title>
        <authorList>
            <person name="Adams M.D."/>
            <person name="Celniker S.E."/>
            <person name="Holt R.A."/>
            <person name="Evans C.A."/>
            <person name="Gocayne J.D."/>
            <person name="Amanatides P.G."/>
            <person name="Scherer S.E."/>
            <person name="Li P.W."/>
            <person name="Hoskins R.A."/>
            <person name="Galle R.F."/>
            <person name="George R.A."/>
            <person name="Lewis S.E."/>
            <person name="Richards S."/>
            <person name="Ashburner M."/>
            <person name="Henderson S.N."/>
            <person name="Sutton G.G."/>
            <person name="Wortman J.R."/>
            <person name="Yandell M.D."/>
            <person name="Zhang Q."/>
            <person name="Chen L.X."/>
            <person name="Brandon R.C."/>
            <person name="Rogers Y.-H.C."/>
            <person name="Blazej R.G."/>
            <person name="Champe M."/>
            <person name="Pfeiffer B.D."/>
            <person name="Wan K.H."/>
            <person name="Doyle C."/>
            <person name="Baxter E.G."/>
            <person name="Helt G."/>
            <person name="Nelson C.R."/>
            <person name="Miklos G.L.G."/>
            <person name="Abril J.F."/>
            <person name="Agbayani A."/>
            <person name="An H.-J."/>
            <person name="Andrews-Pfannkoch C."/>
            <person name="Baldwin D."/>
            <person name="Ballew R.M."/>
            <person name="Basu A."/>
            <person name="Baxendale J."/>
            <person name="Bayraktaroglu L."/>
            <person name="Beasley E.M."/>
            <person name="Beeson K.Y."/>
            <person name="Benos P.V."/>
            <person name="Berman B.P."/>
            <person name="Bhandari D."/>
            <person name="Bolshakov S."/>
            <person name="Borkova D."/>
            <person name="Botchan M.R."/>
            <person name="Bouck J."/>
            <person name="Brokstein P."/>
            <person name="Brottier P."/>
            <person name="Burtis K.C."/>
            <person name="Busam D.A."/>
            <person name="Butler H."/>
            <person name="Cadieu E."/>
            <person name="Center A."/>
            <person name="Chandra I."/>
            <person name="Cherry J.M."/>
            <person name="Cawley S."/>
            <person name="Dahlke C."/>
            <person name="Davenport L.B."/>
            <person name="Davies P."/>
            <person name="de Pablos B."/>
            <person name="Delcher A."/>
            <person name="Deng Z."/>
            <person name="Mays A.D."/>
            <person name="Dew I."/>
            <person name="Dietz S.M."/>
            <person name="Dodson K."/>
            <person name="Doup L.E."/>
            <person name="Downes M."/>
            <person name="Dugan-Rocha S."/>
            <person name="Dunkov B.C."/>
            <person name="Dunn P."/>
            <person name="Durbin K.J."/>
            <person name="Evangelista C.C."/>
            <person name="Ferraz C."/>
            <person name="Ferriera S."/>
            <person name="Fleischmann W."/>
            <person name="Fosler C."/>
            <person name="Gabrielian A.E."/>
            <person name="Garg N.S."/>
            <person name="Gelbart W.M."/>
            <person name="Glasser K."/>
            <person name="Glodek A."/>
            <person name="Gong F."/>
            <person name="Gorrell J.H."/>
            <person name="Gu Z."/>
            <person name="Guan P."/>
            <person name="Harris M."/>
            <person name="Harris N.L."/>
            <person name="Harvey D.A."/>
            <person name="Heiman T.J."/>
            <person name="Hernandez J.R."/>
            <person name="Houck J."/>
            <person name="Hostin D."/>
            <person name="Houston K.A."/>
            <person name="Howland T.J."/>
            <person name="Wei M.-H."/>
            <person name="Ibegwam C."/>
            <person name="Jalali M."/>
            <person name="Kalush F."/>
            <person name="Karpen G.H."/>
            <person name="Ke Z."/>
            <person name="Kennison J.A."/>
            <person name="Ketchum K.A."/>
            <person name="Kimmel B.E."/>
            <person name="Kodira C.D."/>
            <person name="Kraft C.L."/>
            <person name="Kravitz S."/>
            <person name="Kulp D."/>
            <person name="Lai Z."/>
            <person name="Lasko P."/>
            <person name="Lei Y."/>
            <person name="Levitsky A.A."/>
            <person name="Li J.H."/>
            <person name="Li Z."/>
            <person name="Liang Y."/>
            <person name="Lin X."/>
            <person name="Liu X."/>
            <person name="Mattei B."/>
            <person name="McIntosh T.C."/>
            <person name="McLeod M.P."/>
            <person name="McPherson D."/>
            <person name="Merkulov G."/>
            <person name="Milshina N.V."/>
            <person name="Mobarry C."/>
            <person name="Morris J."/>
            <person name="Moshrefi A."/>
            <person name="Mount S.M."/>
            <person name="Moy M."/>
            <person name="Murphy B."/>
            <person name="Murphy L."/>
            <person name="Muzny D.M."/>
            <person name="Nelson D.L."/>
            <person name="Nelson D.R."/>
            <person name="Nelson K.A."/>
            <person name="Nixon K."/>
            <person name="Nusskern D.R."/>
            <person name="Pacleb J.M."/>
            <person name="Palazzolo M."/>
            <person name="Pittman G.S."/>
            <person name="Pan S."/>
            <person name="Pollard J."/>
            <person name="Puri V."/>
            <person name="Reese M.G."/>
            <person name="Reinert K."/>
            <person name="Remington K."/>
            <person name="Saunders R.D.C."/>
            <person name="Scheeler F."/>
            <person name="Shen H."/>
            <person name="Shue B.C."/>
            <person name="Siden-Kiamos I."/>
            <person name="Simpson M."/>
            <person name="Skupski M.P."/>
            <person name="Smith T.J."/>
            <person name="Spier E."/>
            <person name="Spradling A.C."/>
            <person name="Stapleton M."/>
            <person name="Strong R."/>
            <person name="Sun E."/>
            <person name="Svirskas R."/>
            <person name="Tector C."/>
            <person name="Turner R."/>
            <person name="Venter E."/>
            <person name="Wang A.H."/>
            <person name="Wang X."/>
            <person name="Wang Z.-Y."/>
            <person name="Wassarman D.A."/>
            <person name="Weinstock G.M."/>
            <person name="Weissenbach J."/>
            <person name="Williams S.M."/>
            <person name="Woodage T."/>
            <person name="Worley K.C."/>
            <person name="Wu D."/>
            <person name="Yang S."/>
            <person name="Yao Q.A."/>
            <person name="Ye J."/>
            <person name="Yeh R.-F."/>
            <person name="Zaveri J.S."/>
            <person name="Zhan M."/>
            <person name="Zhang G."/>
            <person name="Zhao Q."/>
            <person name="Zheng L."/>
            <person name="Zheng X.H."/>
            <person name="Zhong F.N."/>
            <person name="Zhong W."/>
            <person name="Zhou X."/>
            <person name="Zhu S.C."/>
            <person name="Zhu X."/>
            <person name="Smith H.O."/>
            <person name="Gibbs R.A."/>
            <person name="Myers E.W."/>
            <person name="Rubin G.M."/>
            <person name="Venter J.C."/>
        </authorList>
    </citation>
    <scope>NUCLEOTIDE SEQUENCE [LARGE SCALE GENOMIC DNA]</scope>
    <source>
        <strain>Berkeley</strain>
    </source>
</reference>
<reference key="3">
    <citation type="journal article" date="2002" name="Genome Biol.">
        <title>Annotation of the Drosophila melanogaster euchromatic genome: a systematic review.</title>
        <authorList>
            <person name="Misra S."/>
            <person name="Crosby M.A."/>
            <person name="Mungall C.J."/>
            <person name="Matthews B.B."/>
            <person name="Campbell K.S."/>
            <person name="Hradecky P."/>
            <person name="Huang Y."/>
            <person name="Kaminker J.S."/>
            <person name="Millburn G.H."/>
            <person name="Prochnik S.E."/>
            <person name="Smith C.D."/>
            <person name="Tupy J.L."/>
            <person name="Whitfield E.J."/>
            <person name="Bayraktaroglu L."/>
            <person name="Berman B.P."/>
            <person name="Bettencourt B.R."/>
            <person name="Celniker S.E."/>
            <person name="de Grey A.D.N.J."/>
            <person name="Drysdale R.A."/>
            <person name="Harris N.L."/>
            <person name="Richter J."/>
            <person name="Russo S."/>
            <person name="Schroeder A.J."/>
            <person name="Shu S.Q."/>
            <person name="Stapleton M."/>
            <person name="Yamada C."/>
            <person name="Ashburner M."/>
            <person name="Gelbart W.M."/>
            <person name="Rubin G.M."/>
            <person name="Lewis S.E."/>
        </authorList>
    </citation>
    <scope>GENOME REANNOTATION</scope>
    <source>
        <strain>Berkeley</strain>
    </source>
</reference>
<reference key="4">
    <citation type="journal article" date="2002" name="Genome Biol.">
        <title>A Drosophila full-length cDNA resource.</title>
        <authorList>
            <person name="Stapleton M."/>
            <person name="Carlson J.W."/>
            <person name="Brokstein P."/>
            <person name="Yu C."/>
            <person name="Champe M."/>
            <person name="George R.A."/>
            <person name="Guarin H."/>
            <person name="Kronmiller B."/>
            <person name="Pacleb J.M."/>
            <person name="Park S."/>
            <person name="Wan K.H."/>
            <person name="Rubin G.M."/>
            <person name="Celniker S.E."/>
        </authorList>
    </citation>
    <scope>NUCLEOTIDE SEQUENCE [LARGE SCALE MRNA]</scope>
    <source>
        <strain>Berkeley</strain>
        <tissue>Head</tissue>
    </source>
</reference>
<reference key="5">
    <citation type="submission" date="2008-09" db="EMBL/GenBank/DDBJ databases">
        <authorList>
            <person name="Carlson J.W."/>
            <person name="Booth B."/>
            <person name="Frise E."/>
            <person name="Park S."/>
            <person name="Wan K.H."/>
            <person name="Yu C."/>
            <person name="Celniker S.E."/>
        </authorList>
    </citation>
    <scope>NUCLEOTIDE SEQUENCE [LARGE SCALE MRNA]</scope>
    <source>
        <strain>Berkeley</strain>
    </source>
</reference>
<reference key="6">
    <citation type="journal article" date="2001" name="Proc. Natl. Acad. Sci. U.S.A.">
        <title>Immunolocalization of UDP-glucose:glycoprotein glucosyltransferase indicates involvement of pre-Golgi intermediates in protein quality control.</title>
        <authorList>
            <person name="Zuber C."/>
            <person name="Fan J.-Y."/>
            <person name="Guhl B."/>
            <person name="Parodi A."/>
            <person name="Fessler J.H."/>
            <person name="Parker C."/>
            <person name="Roth J."/>
        </authorList>
    </citation>
    <scope>FUNCTION</scope>
    <scope>SUBCELLULAR LOCATION</scope>
</reference>
<reference key="7">
    <citation type="journal article" date="2012" name="Biochem. Biophys. Res. Commun.">
        <title>Biophysical properties of UDP-glucose:glycoprotein glucosyltransferase, a folding sensor enzyme in the ER, delineated by synthetic probes.</title>
        <authorList>
            <person name="Sakono M."/>
            <person name="Seko A."/>
            <person name="Takeda Y."/>
            <person name="Hachisu M."/>
            <person name="Ito Y."/>
        </authorList>
    </citation>
    <scope>FUNCTION</scope>
    <scope>CATALYTIC ACTIVITY</scope>
    <scope>BIOPHYSICOCHEMICAL PROPERTIES</scope>
</reference>
<reference key="8">
    <citation type="journal article" date="2017" name="J. Biol. Chem.">
        <title>Single-particle electron microscopy structure of UDP-glucose:glycoprotein glucosyltransferase suggests a selectivity mechanism for misfolded proteins.</title>
        <authorList>
            <person name="Calles-Garcia D."/>
            <person name="Yang M."/>
            <person name="Soya N."/>
            <person name="Melero R."/>
            <person name="Menade M."/>
            <person name="Ito Y."/>
            <person name="Vargas J."/>
            <person name="Lukacs G.L."/>
            <person name="Kollman J.M."/>
            <person name="Kozlov G."/>
            <person name="Gehring K."/>
        </authorList>
    </citation>
    <scope>SUBUNIT</scope>
    <scope>INTERACTION WITH CG7484</scope>
    <scope>MUTAGENESIS OF 262-GLU--GLY-272; 274-ASP--HIS-282; 285-LEU--ARG-295 AND 298-GLN--GLN-305</scope>
</reference>
<keyword id="KW-0903">Direct protein sequencing</keyword>
<keyword id="KW-0256">Endoplasmic reticulum</keyword>
<keyword id="KW-0325">Glycoprotein</keyword>
<keyword id="KW-0328">Glycosyltransferase</keyword>
<keyword id="KW-1185">Reference proteome</keyword>
<keyword id="KW-0732">Signal</keyword>
<keyword id="KW-0808">Transferase</keyword>
<evidence type="ECO:0000250" key="1"/>
<evidence type="ECO:0000255" key="2"/>
<evidence type="ECO:0000256" key="3">
    <source>
        <dbReference type="SAM" id="MobiDB-lite"/>
    </source>
</evidence>
<evidence type="ECO:0000269" key="4">
    <source>
    </source>
</evidence>
<evidence type="ECO:0000269" key="5">
    <source>
    </source>
</evidence>
<evidence type="ECO:0000269" key="6">
    <source>
    </source>
</evidence>
<evidence type="ECO:0000269" key="7">
    <source>
    </source>
</evidence>
<evidence type="ECO:0000303" key="8">
    <source>
    </source>
</evidence>
<evidence type="ECO:0000305" key="9"/>
<evidence type="ECO:0000305" key="10">
    <source>
    </source>
</evidence>
<evidence type="ECO:0000312" key="11">
    <source>
        <dbReference type="FlyBase" id="FBgn0014075"/>
    </source>
</evidence>
<feature type="signal peptide" evidence="7">
    <location>
        <begin position="1"/>
        <end position="22"/>
    </location>
</feature>
<feature type="chain" id="PRO_0000012270" description="UDP-glucose:glycoprotein glucosyltransferase">
    <location>
        <begin position="23"/>
        <end position="1548"/>
    </location>
</feature>
<feature type="region of interest" description="Disordered" evidence="3">
    <location>
        <begin position="243"/>
        <end position="265"/>
    </location>
</feature>
<feature type="region of interest" description="Glucosyltransferase" evidence="1">
    <location>
        <begin position="1227"/>
        <end position="1548"/>
    </location>
</feature>
<feature type="region of interest" description="Disordered" evidence="3">
    <location>
        <begin position="1512"/>
        <end position="1548"/>
    </location>
</feature>
<feature type="short sequence motif" description="Prevents secretion from ER" evidence="2">
    <location>
        <begin position="1545"/>
        <end position="1548"/>
    </location>
</feature>
<feature type="compositionally biased region" description="Basic and acidic residues" evidence="3">
    <location>
        <begin position="243"/>
        <end position="253"/>
    </location>
</feature>
<feature type="compositionally biased region" description="Basic and acidic residues" evidence="3">
    <location>
        <begin position="1512"/>
        <end position="1523"/>
    </location>
</feature>
<feature type="glycosylation site" description="N-linked (GlcNAc...) asparagine" evidence="2">
    <location>
        <position position="181"/>
    </location>
</feature>
<feature type="glycosylation site" description="N-linked (GlcNAc...) asparagine" evidence="2">
    <location>
        <position position="266"/>
    </location>
</feature>
<feature type="glycosylation site" description="N-linked (GlcNAc...) asparagine" evidence="2">
    <location>
        <position position="864"/>
    </location>
</feature>
<feature type="mutagenesis site" description="Abolishes binding to human SELENOF/SEP15." evidence="6">
    <location>
        <begin position="262"/>
        <end position="272"/>
    </location>
</feature>
<feature type="mutagenesis site" description="Reduces binding to human SELENOF/SEP15." evidence="6">
    <location>
        <begin position="274"/>
        <end position="282"/>
    </location>
</feature>
<feature type="mutagenesis site" description="Reduces binding human SELENOF/SEP15." evidence="6">
    <location>
        <begin position="285"/>
        <end position="295"/>
    </location>
</feature>
<feature type="mutagenesis site" description="Destabilizes protein structure and targets it for degradation." evidence="6">
    <location>
        <begin position="298"/>
        <end position="305"/>
    </location>
</feature>
<feature type="sequence conflict" description="In Ref. 1; AAA85850." evidence="9" ref="1">
    <original>S</original>
    <variation>P</variation>
    <location>
        <position position="166"/>
    </location>
</feature>
<feature type="sequence conflict" description="In Ref. 1; AAA85850." evidence="9" ref="1">
    <original>G</original>
    <variation>E</variation>
    <location>
        <position position="622"/>
    </location>
</feature>
<feature type="sequence conflict" description="In Ref. 1; AAA85850." evidence="9" ref="1">
    <original>A</original>
    <variation>T</variation>
    <location>
        <position position="748"/>
    </location>
</feature>
<feature type="sequence conflict" description="In Ref. 1; AAA85850." evidence="9" ref="1">
    <original>N</original>
    <variation>K</variation>
    <location>
        <position position="963"/>
    </location>
</feature>
<feature type="sequence conflict" description="In Ref. 1; AAA85850." evidence="9" ref="1">
    <original>T</original>
    <variation>S</variation>
    <location>
        <position position="1233"/>
    </location>
</feature>
<dbReference type="EC" id="2.4.1.-" evidence="5 7"/>
<dbReference type="EMBL" id="U20554">
    <property type="protein sequence ID" value="AAA85850.1"/>
    <property type="molecule type" value="mRNA"/>
</dbReference>
<dbReference type="EMBL" id="AE014296">
    <property type="protein sequence ID" value="AAF49220.1"/>
    <property type="molecule type" value="Genomic_DNA"/>
</dbReference>
<dbReference type="EMBL" id="AY058353">
    <property type="protein sequence ID" value="AAL13582.1"/>
    <property type="status" value="ALT_FRAME"/>
    <property type="molecule type" value="mRNA"/>
</dbReference>
<dbReference type="EMBL" id="BT044158">
    <property type="protein sequence ID" value="ACH92223.1"/>
    <property type="molecule type" value="mRNA"/>
</dbReference>
<dbReference type="PIR" id="S54723">
    <property type="entry name" value="S54723"/>
</dbReference>
<dbReference type="RefSeq" id="NP_524151.2">
    <property type="nucleotide sequence ID" value="NM_079427.3"/>
</dbReference>
<dbReference type="SMR" id="Q09332"/>
<dbReference type="BioGRID" id="65336">
    <property type="interactions" value="14"/>
</dbReference>
<dbReference type="FunCoup" id="Q09332">
    <property type="interactions" value="1684"/>
</dbReference>
<dbReference type="IntAct" id="Q09332">
    <property type="interactions" value="19"/>
</dbReference>
<dbReference type="STRING" id="7227.FBpp0074831"/>
<dbReference type="CAZy" id="GT24">
    <property type="family name" value="Glycosyltransferase Family 24"/>
</dbReference>
<dbReference type="GlyCosmos" id="Q09332">
    <property type="glycosylation" value="3 sites, No reported glycans"/>
</dbReference>
<dbReference type="GlyGen" id="Q09332">
    <property type="glycosylation" value="4 sites"/>
</dbReference>
<dbReference type="PaxDb" id="7227-FBpp0074831"/>
<dbReference type="EnsemblMetazoa" id="FBtr0075064">
    <property type="protein sequence ID" value="FBpp0074831"/>
    <property type="gene ID" value="FBgn0014075"/>
</dbReference>
<dbReference type="GeneID" id="40055"/>
<dbReference type="KEGG" id="dme:Dmel_CG6850"/>
<dbReference type="AGR" id="FB:FBgn0014075"/>
<dbReference type="CTD" id="40055"/>
<dbReference type="FlyBase" id="FBgn0014075">
    <property type="gene designation" value="Uggt"/>
</dbReference>
<dbReference type="VEuPathDB" id="VectorBase:FBgn0014075"/>
<dbReference type="eggNOG" id="KOG1879">
    <property type="taxonomic scope" value="Eukaryota"/>
</dbReference>
<dbReference type="GeneTree" id="ENSGT00390000004600"/>
<dbReference type="HOGENOM" id="CLU_002668_1_1_1"/>
<dbReference type="InParanoid" id="Q09332"/>
<dbReference type="OMA" id="RQTKTRF"/>
<dbReference type="OrthoDB" id="27683at2759"/>
<dbReference type="PhylomeDB" id="Q09332"/>
<dbReference type="SignaLink" id="Q09332"/>
<dbReference type="UniPathway" id="UPA00378"/>
<dbReference type="BioGRID-ORCS" id="40055">
    <property type="hits" value="0 hits in 3 CRISPR screens"/>
</dbReference>
<dbReference type="ChiTaRS" id="Ugt">
    <property type="organism name" value="fly"/>
</dbReference>
<dbReference type="GenomeRNAi" id="40055"/>
<dbReference type="PRO" id="PR:Q09332"/>
<dbReference type="Proteomes" id="UP000000803">
    <property type="component" value="Chromosome 3L"/>
</dbReference>
<dbReference type="Bgee" id="FBgn0014075">
    <property type="expression patterns" value="Expressed in embryonic/larval hemocyte (Drosophila) and 126 other cell types or tissues"/>
</dbReference>
<dbReference type="GO" id="GO:0005737">
    <property type="term" value="C:cytoplasm"/>
    <property type="evidence" value="ECO:0000304"/>
    <property type="project" value="FlyBase"/>
</dbReference>
<dbReference type="GO" id="GO:0012505">
    <property type="term" value="C:endomembrane system"/>
    <property type="evidence" value="ECO:0007005"/>
    <property type="project" value="FlyBase"/>
</dbReference>
<dbReference type="GO" id="GO:0005783">
    <property type="term" value="C:endoplasmic reticulum"/>
    <property type="evidence" value="ECO:0000314"/>
    <property type="project" value="FlyBase"/>
</dbReference>
<dbReference type="GO" id="GO:0005788">
    <property type="term" value="C:endoplasmic reticulum lumen"/>
    <property type="evidence" value="ECO:0007669"/>
    <property type="project" value="UniProtKB-SubCell"/>
</dbReference>
<dbReference type="GO" id="GO:0005793">
    <property type="term" value="C:endoplasmic reticulum-Golgi intermediate compartment"/>
    <property type="evidence" value="ECO:0007669"/>
    <property type="project" value="UniProtKB-SubCell"/>
</dbReference>
<dbReference type="GO" id="GO:0005635">
    <property type="term" value="C:nuclear envelope"/>
    <property type="evidence" value="ECO:0000314"/>
    <property type="project" value="FlyBase"/>
</dbReference>
<dbReference type="GO" id="GO:0005791">
    <property type="term" value="C:rough endoplasmic reticulum"/>
    <property type="evidence" value="ECO:0000314"/>
    <property type="project" value="FlyBase"/>
</dbReference>
<dbReference type="GO" id="GO:0003980">
    <property type="term" value="F:UDP-glucose:glycoprotein glucosyltransferase activity"/>
    <property type="evidence" value="ECO:0000314"/>
    <property type="project" value="UniProtKB"/>
</dbReference>
<dbReference type="GO" id="GO:0051082">
    <property type="term" value="F:unfolded protein binding"/>
    <property type="evidence" value="ECO:0000318"/>
    <property type="project" value="GO_Central"/>
</dbReference>
<dbReference type="GO" id="GO:0006486">
    <property type="term" value="P:protein glycosylation"/>
    <property type="evidence" value="ECO:0000314"/>
    <property type="project" value="FlyBase"/>
</dbReference>
<dbReference type="GO" id="GO:0018279">
    <property type="term" value="P:protein N-linked glycosylation via asparagine"/>
    <property type="evidence" value="ECO:0000318"/>
    <property type="project" value="GO_Central"/>
</dbReference>
<dbReference type="CDD" id="cd06432">
    <property type="entry name" value="GT8_HUGT1_C_like"/>
    <property type="match status" value="1"/>
</dbReference>
<dbReference type="FunFam" id="3.90.550.10:FF:000004">
    <property type="entry name" value="UDP-glucose glycoprotein glucosyltransferase 1"/>
    <property type="match status" value="1"/>
</dbReference>
<dbReference type="Gene3D" id="3.90.550.10">
    <property type="entry name" value="Spore Coat Polysaccharide Biosynthesis Protein SpsA, Chain A"/>
    <property type="match status" value="1"/>
</dbReference>
<dbReference type="InterPro" id="IPR040497">
    <property type="entry name" value="Glyco_transf_24"/>
</dbReference>
<dbReference type="InterPro" id="IPR029044">
    <property type="entry name" value="Nucleotide-diphossugar_trans"/>
</dbReference>
<dbReference type="InterPro" id="IPR009448">
    <property type="entry name" value="UDP-g_GGtrans"/>
</dbReference>
<dbReference type="InterPro" id="IPR040693">
    <property type="entry name" value="UGGT_TRXL_1"/>
</dbReference>
<dbReference type="InterPro" id="IPR040694">
    <property type="entry name" value="UGGT_TRXL_2"/>
</dbReference>
<dbReference type="InterPro" id="IPR040692">
    <property type="entry name" value="UGGT_TRXL_3"/>
</dbReference>
<dbReference type="InterPro" id="IPR040525">
    <property type="entry name" value="UGGT_TRXL_4"/>
</dbReference>
<dbReference type="PANTHER" id="PTHR11226">
    <property type="entry name" value="UDP-GLUCOSE GLYCOPROTEIN:GLUCOSYLTRANSFERASE"/>
    <property type="match status" value="1"/>
</dbReference>
<dbReference type="PANTHER" id="PTHR11226:SF0">
    <property type="entry name" value="UDP-GLUCOSE:GLYCOPROTEIN GLUCOSYLTRANSFERASE"/>
    <property type="match status" value="1"/>
</dbReference>
<dbReference type="Pfam" id="PF18404">
    <property type="entry name" value="Glyco_transf_24"/>
    <property type="match status" value="1"/>
</dbReference>
<dbReference type="Pfam" id="PF18400">
    <property type="entry name" value="Thioredoxin_12"/>
    <property type="match status" value="1"/>
</dbReference>
<dbReference type="Pfam" id="PF18401">
    <property type="entry name" value="Thioredoxin_13"/>
    <property type="match status" value="1"/>
</dbReference>
<dbReference type="Pfam" id="PF18402">
    <property type="entry name" value="Thioredoxin_14"/>
    <property type="match status" value="1"/>
</dbReference>
<dbReference type="Pfam" id="PF18403">
    <property type="entry name" value="Thioredoxin_15"/>
    <property type="match status" value="1"/>
</dbReference>
<dbReference type="Pfam" id="PF06427">
    <property type="entry name" value="UDP-g_GGTase"/>
    <property type="match status" value="1"/>
</dbReference>
<dbReference type="SUPFAM" id="SSF53448">
    <property type="entry name" value="Nucleotide-diphospho-sugar transferases"/>
    <property type="match status" value="1"/>
</dbReference>
<sequence length="1548" mass="174354">MLRAVALCVSVVLIALYTPTSGESSQSYPITTLINAKWTQTPLYLEIAEYLADEQAGLFWDYVSGVTKLDTVLNEYDTESQQYNAALELVKSHVSSPQLPLLRLVVSMHSLTPRIQTHFQLAEELRSSGSCQSFTFAQVGSELACSFNELQKKLEVPLAKDSLDASVVTYSFDHIFPGSENNTRTVVLYGDLGSSQFRTYHKLLEKEANAGRIRYILRHQLAKKDKRPVRLSGYGVELHLKSTEYKSQDDAPKPEAGSTSDEDLANESDVQGFDFKVLKQKHPTLKRALDQLRQRLLQGNDEIAQLKAWEFQDLGLQAAAAIAEIQGDETLQILQYTAHNFPMLARTLLAHKVTDGLRAEVKHNTEAFGRSLNVAPPDGALFINGLFFDADTMDLYSLIETLRSEMRVLESLHSNNVRGSLASSLLALDLTASSKKEFAIDIRDTAVQWVNDIENDVQYRRWPSSVMDLLRPTFPGMLRNIRKNVFNLVLVVDALQPTARSVIKLSESFVIHQAPIRLGLVFDARDANEDNLADYVAITCAYNYVSQKKDARAALSFLTDIYAAVGETKVVTKKDIVKQLTKEFTSLSFAKAEEFLEEDSTYDYGRELAAEFIQRLGFGDKGQPQALLNGVPMPSNVVTADSDFEEAIFTEIMTHTSNLQKAVYKGELTDNDVAIDYLMNQPHVMPRLNQRILSQEDVKYLDINGVAYKNLGNVGVLNRLSNRDMTATLMDNLKYFGGKKSTELIGRASLQFLTIWVFADLETDQGRDLLTHALDYVQSGESVRVAFIPNTESSSASSRRNLNRLVWAAMQSLPPTQATEQVLKWLKKPKEKIEIPTQLEDILGSTELHLKMLRVYSQRVLGLNKSQRLVIGNGRLYGPLSSDESFDSADFALLARFSSLQYSDKVRQVLKESAQDVNEEFNSDTLLKLYASLLPRQTKTRFKLPTDLKTDHSVVKLPPKQENLPHFDVAAVLDPASRAAQKLTPILILLRQVLNCQLNLYLIPVPQHSDMPVKNFYRYVVEPEVQFEANGGRSDGPLAKFSGLPANPLLTQQLQVPENWLVEAVRAVYDLDNIKLTDIGGPVHSEFDLEYLLLEGHCFDAASGAPPRGLQLVLGTQSQPTLVDTIVMANLGYFQLKANPGAWSLRLREGKSADIYAISHIEGTNTHHSAGSSEVQVLITSLRSHVVKLRVSKKPGMQQAELLSDDNEQAAQSGMWNSIASSFGGGSANQAATDEDTETINIFSVASGHLYERLLRIMMVSLLKHTKSPVKFWFLKNYLSPQFTDFLPHMASEYNFQYELVQYKWPRWLHQQTEKQRTIWGYKILFLDVLFPLNVRKIIFVDADAIVRTDIKELYDMDLGGAPYAYTPFCDSRKEMEGFRFWKQGYWRSHLMGRRYHISALYVVDLKRFRKIAAGDRLRGQYQALSQDPNSLSNLDQDLPNNMIHQVAIKSLPDDWLWCQTWCSDSNFKTAKVIDLCNNPQTKEAKLTAAQRIVPEWKDYDAELKTLMSRIEDHENSHSRDSAVDDSVDDSVEVTTVTPSHEPKHGEL</sequence>